<feature type="chain" id="PRO_0000429679" description="Transcription repressor OFP10">
    <location>
        <begin position="1"/>
        <end position="196"/>
    </location>
</feature>
<feature type="domain" description="OVATE" evidence="2">
    <location>
        <begin position="100"/>
        <end position="159"/>
    </location>
</feature>
<protein>
    <recommendedName>
        <fullName>Transcription repressor OFP10</fullName>
    </recommendedName>
    <alternativeName>
        <fullName>Ovate family protein 10</fullName>
        <shortName>AtOFP10</shortName>
    </alternativeName>
</protein>
<proteinExistence type="evidence at transcript level"/>
<keyword id="KW-0539">Nucleus</keyword>
<keyword id="KW-1185">Reference proteome</keyword>
<keyword id="KW-0678">Repressor</keyword>
<keyword id="KW-0804">Transcription</keyword>
<keyword id="KW-0805">Transcription regulation</keyword>
<gene>
    <name type="primary">OFP10</name>
    <name type="ordered locus">At5g22240</name>
    <name type="ORF">T6G21.1</name>
</gene>
<evidence type="ECO:0000250" key="1"/>
<evidence type="ECO:0000255" key="2">
    <source>
        <dbReference type="PROSITE-ProRule" id="PRU01090"/>
    </source>
</evidence>
<evidence type="ECO:0000269" key="3">
    <source>
    </source>
</evidence>
<evidence type="ECO:0000305" key="4">
    <source>
    </source>
</evidence>
<name>OFP10_ARATH</name>
<organism>
    <name type="scientific">Arabidopsis thaliana</name>
    <name type="common">Mouse-ear cress</name>
    <dbReference type="NCBI Taxonomy" id="3702"/>
    <lineage>
        <taxon>Eukaryota</taxon>
        <taxon>Viridiplantae</taxon>
        <taxon>Streptophyta</taxon>
        <taxon>Embryophyta</taxon>
        <taxon>Tracheophyta</taxon>
        <taxon>Spermatophyta</taxon>
        <taxon>Magnoliopsida</taxon>
        <taxon>eudicotyledons</taxon>
        <taxon>Gunneridae</taxon>
        <taxon>Pentapetalae</taxon>
        <taxon>rosids</taxon>
        <taxon>malvids</taxon>
        <taxon>Brassicales</taxon>
        <taxon>Brassicaceae</taxon>
        <taxon>Camelineae</taxon>
        <taxon>Arabidopsis</taxon>
    </lineage>
</organism>
<comment type="function">
    <text evidence="3">Transcriptional repressor that may regulate multiple aspects of plant growth and development through the regulation of BEL1-LIKE (BLH) and KNOX TALE (KNAT) homeodomain transcription factors.</text>
</comment>
<comment type="subcellular location">
    <subcellularLocation>
        <location evidence="1">Nucleus</location>
    </subcellularLocation>
</comment>
<comment type="tissue specificity">
    <text evidence="3">Expressed in roots, cauline leaves, shoots, stems, flower buds and siliques.</text>
</comment>
<comment type="disruption phenotype">
    <text evidence="3">No visible phenotype under normal growth conditions.</text>
</comment>
<comment type="miscellaneous">
    <text evidence="4">Plants over-expressing OFP10 have no visible phenotype.</text>
</comment>
<accession>Q9FMS7</accession>
<sequence>MLNLQAKLNEKKVPLLTNFPTPTSSLNNLNLFSLPLVKKKMSFKKMMKYILKTIFKPIFMACGCGSTVPPSSHSHYTPGPPVSPTVLRSPCPKIDESVAMAKESINPFEDYKKSMNQMIEERYIETESELKELLRCFLDINPSPQHNLIVRAFVDVCSHLQPPHDRRGKSLGRLLRLYVNNPLDNNDDDSHQTSSK</sequence>
<dbReference type="EMBL" id="AB007651">
    <property type="protein sequence ID" value="BAB08322.1"/>
    <property type="molecule type" value="Genomic_DNA"/>
</dbReference>
<dbReference type="EMBL" id="CP002688">
    <property type="protein sequence ID" value="AED93000.1"/>
    <property type="molecule type" value="Genomic_DNA"/>
</dbReference>
<dbReference type="RefSeq" id="NP_197616.1">
    <property type="nucleotide sequence ID" value="NM_122129.2"/>
</dbReference>
<dbReference type="BioGRID" id="17559">
    <property type="interactions" value="3"/>
</dbReference>
<dbReference type="IntAct" id="Q9FMS7">
    <property type="interactions" value="3"/>
</dbReference>
<dbReference type="STRING" id="3702.Q9FMS7"/>
<dbReference type="PaxDb" id="3702-AT5G22240.1"/>
<dbReference type="EnsemblPlants" id="AT5G22240.1">
    <property type="protein sequence ID" value="AT5G22240.1"/>
    <property type="gene ID" value="AT5G22240"/>
</dbReference>
<dbReference type="GeneID" id="832284"/>
<dbReference type="Gramene" id="AT5G22240.1">
    <property type="protein sequence ID" value="AT5G22240.1"/>
    <property type="gene ID" value="AT5G22240"/>
</dbReference>
<dbReference type="KEGG" id="ath:AT5G22240"/>
<dbReference type="Araport" id="AT5G22240"/>
<dbReference type="TAIR" id="AT5G22240">
    <property type="gene designation" value="OFP10"/>
</dbReference>
<dbReference type="eggNOG" id="ENOG502R1H1">
    <property type="taxonomic scope" value="Eukaryota"/>
</dbReference>
<dbReference type="HOGENOM" id="CLU_120172_0_0_1"/>
<dbReference type="InParanoid" id="Q9FMS7"/>
<dbReference type="OMA" id="NDDDSHQ"/>
<dbReference type="PhylomeDB" id="Q9FMS7"/>
<dbReference type="PRO" id="PR:Q9FMS7"/>
<dbReference type="Proteomes" id="UP000006548">
    <property type="component" value="Chromosome 5"/>
</dbReference>
<dbReference type="ExpressionAtlas" id="Q9FMS7">
    <property type="expression patterns" value="baseline and differential"/>
</dbReference>
<dbReference type="GO" id="GO:0005634">
    <property type="term" value="C:nucleus"/>
    <property type="evidence" value="ECO:0007669"/>
    <property type="project" value="UniProtKB-SubCell"/>
</dbReference>
<dbReference type="GO" id="GO:0045892">
    <property type="term" value="P:negative regulation of DNA-templated transcription"/>
    <property type="evidence" value="ECO:0000314"/>
    <property type="project" value="TAIR"/>
</dbReference>
<dbReference type="InterPro" id="IPR038933">
    <property type="entry name" value="Ovate"/>
</dbReference>
<dbReference type="InterPro" id="IPR006458">
    <property type="entry name" value="Ovate_C"/>
</dbReference>
<dbReference type="NCBIfam" id="TIGR01568">
    <property type="entry name" value="A_thal_3678"/>
    <property type="match status" value="1"/>
</dbReference>
<dbReference type="PANTHER" id="PTHR33057:SF138">
    <property type="entry name" value="TRANSCRIPTION REPRESSOR OFP10"/>
    <property type="match status" value="1"/>
</dbReference>
<dbReference type="PANTHER" id="PTHR33057">
    <property type="entry name" value="TRANSCRIPTION REPRESSOR OFP7-RELATED"/>
    <property type="match status" value="1"/>
</dbReference>
<dbReference type="Pfam" id="PF04844">
    <property type="entry name" value="Ovate"/>
    <property type="match status" value="1"/>
</dbReference>
<dbReference type="PROSITE" id="PS51754">
    <property type="entry name" value="OVATE"/>
    <property type="match status" value="1"/>
</dbReference>
<reference key="1">
    <citation type="journal article" date="1997" name="DNA Res.">
        <title>Structural analysis of Arabidopsis thaliana chromosome 5. III. Sequence features of the regions of 1,191,918 bp covered by seventeen physically assigned P1 clones.</title>
        <authorList>
            <person name="Nakamura Y."/>
            <person name="Sato S."/>
            <person name="Kaneko T."/>
            <person name="Kotani H."/>
            <person name="Asamizu E."/>
            <person name="Miyajima N."/>
            <person name="Tabata S."/>
        </authorList>
    </citation>
    <scope>NUCLEOTIDE SEQUENCE [LARGE SCALE GENOMIC DNA]</scope>
    <source>
        <strain>cv. Columbia</strain>
    </source>
</reference>
<reference key="2">
    <citation type="journal article" date="2017" name="Plant J.">
        <title>Araport11: a complete reannotation of the Arabidopsis thaliana reference genome.</title>
        <authorList>
            <person name="Cheng C.Y."/>
            <person name="Krishnakumar V."/>
            <person name="Chan A.P."/>
            <person name="Thibaud-Nissen F."/>
            <person name="Schobel S."/>
            <person name="Town C.D."/>
        </authorList>
    </citation>
    <scope>GENOME REANNOTATION</scope>
    <source>
        <strain>cv. Columbia</strain>
    </source>
</reference>
<reference key="3">
    <citation type="journal article" date="2011" name="PLoS ONE">
        <title>Arabidopsis ovate family proteins, a novel transcriptional repressor family, control multiple aspects of plant growth and development.</title>
        <authorList>
            <person name="Wang S."/>
            <person name="Chang Y."/>
            <person name="Guo J."/>
            <person name="Zeng Q."/>
            <person name="Ellis B.E."/>
            <person name="Chen J.G."/>
        </authorList>
    </citation>
    <scope>FUNCTION</scope>
    <scope>TISSUE SPECIFICITY</scope>
    <scope>GENE FAMILY</scope>
    <scope>DISRUPTION PHENOTYPE</scope>
</reference>